<comment type="function">
    <text evidence="1">One of the primary rRNA binding proteins, this protein initially binds near the 5'-end of the 23S rRNA. It is important during the early stages of 50S assembly. It makes multiple contacts with different domains of the 23S rRNA in the assembled 50S subunit and ribosome.</text>
</comment>
<comment type="function">
    <text evidence="1">Forms part of the polypeptide exit tunnel.</text>
</comment>
<comment type="subunit">
    <text evidence="1">Part of the 50S ribosomal subunit.</text>
</comment>
<comment type="similarity">
    <text evidence="1">Belongs to the universal ribosomal protein uL4 family.</text>
</comment>
<name>RL4_DEHMB</name>
<keyword id="KW-0687">Ribonucleoprotein</keyword>
<keyword id="KW-0689">Ribosomal protein</keyword>
<keyword id="KW-0694">RNA-binding</keyword>
<keyword id="KW-0699">rRNA-binding</keyword>
<feature type="chain" id="PRO_1000086517" description="Large ribosomal subunit protein uL4">
    <location>
        <begin position="1"/>
        <end position="210"/>
    </location>
</feature>
<feature type="region of interest" description="Disordered" evidence="2">
    <location>
        <begin position="41"/>
        <end position="60"/>
    </location>
</feature>
<feature type="region of interest" description="Disordered" evidence="2">
    <location>
        <begin position="67"/>
        <end position="98"/>
    </location>
</feature>
<feature type="compositionally biased region" description="Polar residues" evidence="2">
    <location>
        <begin position="41"/>
        <end position="51"/>
    </location>
</feature>
<organism>
    <name type="scientific">Dehalococcoides mccartyi (strain ATCC BAA-2100 / JCM 16839 / KCTC 5957 / BAV1)</name>
    <dbReference type="NCBI Taxonomy" id="216389"/>
    <lineage>
        <taxon>Bacteria</taxon>
        <taxon>Bacillati</taxon>
        <taxon>Chloroflexota</taxon>
        <taxon>Dehalococcoidia</taxon>
        <taxon>Dehalococcoidales</taxon>
        <taxon>Dehalococcoidaceae</taxon>
        <taxon>Dehalococcoides</taxon>
    </lineage>
</organism>
<reference key="1">
    <citation type="submission" date="2007-05" db="EMBL/GenBank/DDBJ databases">
        <title>Complete sequence of Dehalococcoides sp. BAV1.</title>
        <authorList>
            <consortium name="US DOE Joint Genome Institute"/>
            <person name="Copeland A."/>
            <person name="Lucas S."/>
            <person name="Lapidus A."/>
            <person name="Barry K."/>
            <person name="Detter J.C."/>
            <person name="Glavina del Rio T."/>
            <person name="Hammon N."/>
            <person name="Israni S."/>
            <person name="Pitluck S."/>
            <person name="Lowry S."/>
            <person name="Clum A."/>
            <person name="Schmutz J."/>
            <person name="Larimer F."/>
            <person name="Land M."/>
            <person name="Hauser L."/>
            <person name="Kyrpides N."/>
            <person name="Kim E."/>
            <person name="Ritalahti K.M."/>
            <person name="Loeffler F."/>
            <person name="Richardson P."/>
        </authorList>
    </citation>
    <scope>NUCLEOTIDE SEQUENCE [LARGE SCALE GENOMIC DNA]</scope>
    <source>
        <strain>ATCC BAA-2100 / JCM 16839 / KCTC 5957 / BAV1</strain>
    </source>
</reference>
<protein>
    <recommendedName>
        <fullName evidence="1">Large ribosomal subunit protein uL4</fullName>
    </recommendedName>
    <alternativeName>
        <fullName evidence="3">50S ribosomal protein L4</fullName>
    </alternativeName>
</protein>
<gene>
    <name evidence="1" type="primary">rplD</name>
    <name type="ordered locus">DehaBAV1_0452</name>
</gene>
<accession>A5FRZ0</accession>
<dbReference type="EMBL" id="CP000688">
    <property type="protein sequence ID" value="ABQ17037.1"/>
    <property type="molecule type" value="Genomic_DNA"/>
</dbReference>
<dbReference type="SMR" id="A5FRZ0"/>
<dbReference type="KEGG" id="deb:DehaBAV1_0452"/>
<dbReference type="PATRIC" id="fig|216389.18.peg.495"/>
<dbReference type="HOGENOM" id="CLU_041575_5_2_0"/>
<dbReference type="GO" id="GO:1990904">
    <property type="term" value="C:ribonucleoprotein complex"/>
    <property type="evidence" value="ECO:0007669"/>
    <property type="project" value="UniProtKB-KW"/>
</dbReference>
<dbReference type="GO" id="GO:0005840">
    <property type="term" value="C:ribosome"/>
    <property type="evidence" value="ECO:0007669"/>
    <property type="project" value="UniProtKB-KW"/>
</dbReference>
<dbReference type="GO" id="GO:0019843">
    <property type="term" value="F:rRNA binding"/>
    <property type="evidence" value="ECO:0007669"/>
    <property type="project" value="UniProtKB-UniRule"/>
</dbReference>
<dbReference type="GO" id="GO:0003735">
    <property type="term" value="F:structural constituent of ribosome"/>
    <property type="evidence" value="ECO:0007669"/>
    <property type="project" value="InterPro"/>
</dbReference>
<dbReference type="GO" id="GO:0006412">
    <property type="term" value="P:translation"/>
    <property type="evidence" value="ECO:0007669"/>
    <property type="project" value="UniProtKB-UniRule"/>
</dbReference>
<dbReference type="FunFam" id="3.40.1370.10:FF:000027">
    <property type="entry name" value="50S ribosomal protein L4"/>
    <property type="match status" value="1"/>
</dbReference>
<dbReference type="Gene3D" id="3.40.1370.10">
    <property type="match status" value="1"/>
</dbReference>
<dbReference type="HAMAP" id="MF_01328_B">
    <property type="entry name" value="Ribosomal_uL4_B"/>
    <property type="match status" value="1"/>
</dbReference>
<dbReference type="InterPro" id="IPR002136">
    <property type="entry name" value="Ribosomal_uL4"/>
</dbReference>
<dbReference type="InterPro" id="IPR013005">
    <property type="entry name" value="Ribosomal_uL4-like"/>
</dbReference>
<dbReference type="InterPro" id="IPR023574">
    <property type="entry name" value="Ribosomal_uL4_dom_sf"/>
</dbReference>
<dbReference type="NCBIfam" id="TIGR03953">
    <property type="entry name" value="rplD_bact"/>
    <property type="match status" value="1"/>
</dbReference>
<dbReference type="PANTHER" id="PTHR10746">
    <property type="entry name" value="50S RIBOSOMAL PROTEIN L4"/>
    <property type="match status" value="1"/>
</dbReference>
<dbReference type="PANTHER" id="PTHR10746:SF6">
    <property type="entry name" value="LARGE RIBOSOMAL SUBUNIT PROTEIN UL4M"/>
    <property type="match status" value="1"/>
</dbReference>
<dbReference type="Pfam" id="PF00573">
    <property type="entry name" value="Ribosomal_L4"/>
    <property type="match status" value="1"/>
</dbReference>
<dbReference type="SUPFAM" id="SSF52166">
    <property type="entry name" value="Ribosomal protein L4"/>
    <property type="match status" value="1"/>
</dbReference>
<evidence type="ECO:0000255" key="1">
    <source>
        <dbReference type="HAMAP-Rule" id="MF_01328"/>
    </source>
</evidence>
<evidence type="ECO:0000256" key="2">
    <source>
        <dbReference type="SAM" id="MobiDB-lite"/>
    </source>
</evidence>
<evidence type="ECO:0000305" key="3"/>
<sequence length="210" mass="23362">MEIPVYNASGEIVKNINISEDVFGVPFNEALVHQAFVAQQANARQGTQSTKTRGEVQGSSRKIYRQKGTGNARMGTNRSPVRRHGGVAFGPRPRDFSKDLPKKMRRQAIRCVLSFKLESGELKVIDQLSFDEPKTRDMAKILTALQVISPTLIAVDNPDTNFIKSARNIPAVKTTPANLLNISDMLKNKQLVMTEEAVRQVEELWGQRSG</sequence>
<proteinExistence type="inferred from homology"/>